<reference key="1">
    <citation type="book" date="2006" name="Gram positive pathogens, 2nd edition">
        <title>The Staphylococcus aureus NCTC 8325 genome.</title>
        <editorList>
            <person name="Fischetti V."/>
            <person name="Novick R."/>
            <person name="Ferretti J."/>
            <person name="Portnoy D."/>
            <person name="Rood J."/>
        </editorList>
        <authorList>
            <person name="Gillaspy A.F."/>
            <person name="Worrell V."/>
            <person name="Orvis J."/>
            <person name="Roe B.A."/>
            <person name="Dyer D.W."/>
            <person name="Iandolo J.J."/>
        </authorList>
    </citation>
    <scope>NUCLEOTIDE SEQUENCE [LARGE SCALE GENOMIC DNA]</scope>
    <source>
        <strain>NCTC 8325 / PS 47</strain>
    </source>
</reference>
<comment type="function">
    <text evidence="1">Catalyzes the conversion of pyruvate to formate and acetyl-CoA.</text>
</comment>
<comment type="catalytic activity">
    <reaction evidence="1">
        <text>formate + acetyl-CoA = pyruvate + CoA</text>
        <dbReference type="Rhea" id="RHEA:11844"/>
        <dbReference type="ChEBI" id="CHEBI:15361"/>
        <dbReference type="ChEBI" id="CHEBI:15740"/>
        <dbReference type="ChEBI" id="CHEBI:57287"/>
        <dbReference type="ChEBI" id="CHEBI:57288"/>
        <dbReference type="EC" id="2.3.1.54"/>
    </reaction>
</comment>
<comment type="pathway">
    <text>Fermentation; pyruvate fermentation; formate from pyruvate: step 1/1.</text>
</comment>
<comment type="subunit">
    <text evidence="1">Homodimer.</text>
</comment>
<comment type="subcellular location">
    <subcellularLocation>
        <location evidence="2">Cytoplasm</location>
    </subcellularLocation>
</comment>
<comment type="miscellaneous">
    <text evidence="1">Several mechanisms have been proposed based on complexes formed with substrate analogs. After activation by the glycine radical, the cysteine radical, Cys-414, can abstract hydrogen atoms from the other active site cysteine, Cys-413, and from coenzyme A, and it can also transfer hydrogen atoms to product radicals. The other active site cysteine can attack the central carbonyl of pyruvate and covalently bind the product acetyl group.</text>
</comment>
<comment type="similarity">
    <text evidence="5">Belongs to the glycyl radical enzyme (GRE) family. PFL subfamily.</text>
</comment>
<sequence length="749" mass="84862">MLETNKNHATAWQGFKNGRWNRHVDVREFIQLNYTLYEGNDSFLAGPTEATSKLWEQVMQLSKEERERGGMWDMDTKVASTITSHDAGYLDKDLETIVGVQTEKPFKRSMQPFGGIRMAKAACEAYGYELDEETEKIFTDYRKTHNQGVFDAYSREMLNCRKAGVITGLPDAYGRGRIIGDYRRVALYGVDFLMEEKMHDFNTMSTEMSEDVIRLREELSEQYRALKELKELGQKYGFDLSRPAENFKEAVQWLYLAYLAAIKEQNGAAMSLGRTSTFLDIYAERDLKAGVITESEVQEIIDHFIMKLRIVKFARTPDYNELFSGDPTWVTESIGGVGIDGRPLVTKNSFRFLHSLDNLGPAPEPNLTVLWSVRLPDNFKTYCAKMSIKTSSIQYENDDIMRESYGDDYGIACCVSAMTIGKQMQFFGARANLAKTLLYAINGGKDEKSGAQVGPNFEGINSEVLEYDEVFKKFDQMMDWLAGVYINSLNVIHYMHDKYSYERIEMALHDTEIVRTMATGIAGLSVAADSLSAIKYAQVKPIRNEEGLVVDFEIEGDFPKYGNNDDRVDDIAVDLVERFMTKLRSHKTYRDSEHTMSVLTITSNVVYGKKTGNTPDGRKAGEPFAPGANPMHGRDQKGALSSLSSVAKIPYDCCKDGISNTFSIVPKSLGKEPEDQNRNLTSMLDGYAMQCGHHLNINVFNRETLIDAMEHPEEYPQLTIRVSGYAVNFIKLTREQQLDVISRTFHESM</sequence>
<feature type="chain" id="PRO_0000271720" description="Formate acetyltransferase">
    <location>
        <begin position="1"/>
        <end position="749"/>
    </location>
</feature>
<feature type="domain" description="PFL" evidence="4">
    <location>
        <begin position="3"/>
        <end position="619"/>
    </location>
</feature>
<feature type="domain" description="Glycine radical" evidence="3">
    <location>
        <begin position="626"/>
        <end position="749"/>
    </location>
</feature>
<feature type="active site" description="S-acetylcysteine intermediate" evidence="1">
    <location>
        <position position="413"/>
    </location>
</feature>
<feature type="active site" description="Cysteine radical intermediate" evidence="1">
    <location>
        <position position="414"/>
    </location>
</feature>
<feature type="modified residue" description="Glycine radical" evidence="3">
    <location>
        <position position="724"/>
    </location>
</feature>
<protein>
    <recommendedName>
        <fullName>Formate acetyltransferase</fullName>
        <ecNumber evidence="1">2.3.1.54</ecNumber>
    </recommendedName>
    <alternativeName>
        <fullName>Pyruvate formate-lyase</fullName>
    </alternativeName>
</protein>
<proteinExistence type="inferred from homology"/>
<dbReference type="EC" id="2.3.1.54" evidence="1"/>
<dbReference type="EMBL" id="CP000253">
    <property type="protein sequence ID" value="ABD29365.1"/>
    <property type="molecule type" value="Genomic_DNA"/>
</dbReference>
<dbReference type="RefSeq" id="WP_000894660.1">
    <property type="nucleotide sequence ID" value="NZ_LS483365.1"/>
</dbReference>
<dbReference type="RefSeq" id="YP_498784.1">
    <property type="nucleotide sequence ID" value="NC_007795.1"/>
</dbReference>
<dbReference type="SMR" id="Q2G1D8"/>
<dbReference type="STRING" id="93061.SAOUHSC_00187"/>
<dbReference type="PaxDb" id="1280-SAXN108_0201"/>
<dbReference type="GeneID" id="3919501"/>
<dbReference type="KEGG" id="sao:SAOUHSC_00187"/>
<dbReference type="PATRIC" id="fig|93061.5.peg.175"/>
<dbReference type="eggNOG" id="COG1882">
    <property type="taxonomic scope" value="Bacteria"/>
</dbReference>
<dbReference type="HOGENOM" id="CLU_023898_0_0_9"/>
<dbReference type="OrthoDB" id="9803969at2"/>
<dbReference type="UniPathway" id="UPA00920">
    <property type="reaction ID" value="UER00891"/>
</dbReference>
<dbReference type="PRO" id="PR:Q2G1D8"/>
<dbReference type="Proteomes" id="UP000008816">
    <property type="component" value="Chromosome"/>
</dbReference>
<dbReference type="GO" id="GO:0005829">
    <property type="term" value="C:cytosol"/>
    <property type="evidence" value="ECO:0000318"/>
    <property type="project" value="GO_Central"/>
</dbReference>
<dbReference type="GO" id="GO:0008861">
    <property type="term" value="F:formate C-acetyltransferase activity"/>
    <property type="evidence" value="ECO:0000318"/>
    <property type="project" value="GO_Central"/>
</dbReference>
<dbReference type="GO" id="GO:0006006">
    <property type="term" value="P:glucose metabolic process"/>
    <property type="evidence" value="ECO:0007669"/>
    <property type="project" value="UniProtKB-KW"/>
</dbReference>
<dbReference type="CDD" id="cd01678">
    <property type="entry name" value="PFL1"/>
    <property type="match status" value="1"/>
</dbReference>
<dbReference type="FunFam" id="3.20.70.20:FF:000003">
    <property type="entry name" value="Formate acetyltransferase"/>
    <property type="match status" value="1"/>
</dbReference>
<dbReference type="Gene3D" id="3.20.70.20">
    <property type="match status" value="1"/>
</dbReference>
<dbReference type="InterPro" id="IPR050244">
    <property type="entry name" value="Auton_GlycylRad_Cofactor"/>
</dbReference>
<dbReference type="InterPro" id="IPR005949">
    <property type="entry name" value="Form_AcTrfase"/>
</dbReference>
<dbReference type="InterPro" id="IPR019777">
    <property type="entry name" value="Form_AcTrfase_GR_CS"/>
</dbReference>
<dbReference type="InterPro" id="IPR001150">
    <property type="entry name" value="Gly_radical"/>
</dbReference>
<dbReference type="InterPro" id="IPR004184">
    <property type="entry name" value="PFL_dom"/>
</dbReference>
<dbReference type="NCBIfam" id="TIGR01255">
    <property type="entry name" value="pyr_form_ly_1"/>
    <property type="match status" value="1"/>
</dbReference>
<dbReference type="PANTHER" id="PTHR30191">
    <property type="entry name" value="FORMATE ACETYLTRANSFERASE"/>
    <property type="match status" value="1"/>
</dbReference>
<dbReference type="PANTHER" id="PTHR30191:SF0">
    <property type="entry name" value="FORMATE ACETYLTRANSFERASE 1"/>
    <property type="match status" value="1"/>
</dbReference>
<dbReference type="Pfam" id="PF01228">
    <property type="entry name" value="Gly_radical"/>
    <property type="match status" value="1"/>
</dbReference>
<dbReference type="Pfam" id="PF02901">
    <property type="entry name" value="PFL-like"/>
    <property type="match status" value="1"/>
</dbReference>
<dbReference type="PIRSF" id="PIRSF000379">
    <property type="entry name" value="For_Ac_trans_1"/>
    <property type="match status" value="1"/>
</dbReference>
<dbReference type="SUPFAM" id="SSF51998">
    <property type="entry name" value="PFL-like glycyl radical enzymes"/>
    <property type="match status" value="1"/>
</dbReference>
<dbReference type="PROSITE" id="PS00850">
    <property type="entry name" value="GLY_RADICAL_1"/>
    <property type="match status" value="1"/>
</dbReference>
<dbReference type="PROSITE" id="PS51149">
    <property type="entry name" value="GLY_RADICAL_2"/>
    <property type="match status" value="1"/>
</dbReference>
<dbReference type="PROSITE" id="PS51554">
    <property type="entry name" value="PFL"/>
    <property type="match status" value="1"/>
</dbReference>
<keyword id="KW-0012">Acyltransferase</keyword>
<keyword id="KW-0119">Carbohydrate metabolism</keyword>
<keyword id="KW-0963">Cytoplasm</keyword>
<keyword id="KW-0313">Glucose metabolism</keyword>
<keyword id="KW-0556">Organic radical</keyword>
<keyword id="KW-1185">Reference proteome</keyword>
<keyword id="KW-0808">Transferase</keyword>
<accession>Q2G1D8</accession>
<gene>
    <name type="primary">pflB</name>
    <name type="ordered locus">SAOUHSC_00187</name>
</gene>
<organism>
    <name type="scientific">Staphylococcus aureus (strain NCTC 8325 / PS 47)</name>
    <dbReference type="NCBI Taxonomy" id="93061"/>
    <lineage>
        <taxon>Bacteria</taxon>
        <taxon>Bacillati</taxon>
        <taxon>Bacillota</taxon>
        <taxon>Bacilli</taxon>
        <taxon>Bacillales</taxon>
        <taxon>Staphylococcaceae</taxon>
        <taxon>Staphylococcus</taxon>
    </lineage>
</organism>
<name>PFLB_STAA8</name>
<evidence type="ECO:0000250" key="1">
    <source>
        <dbReference type="UniProtKB" id="P09373"/>
    </source>
</evidence>
<evidence type="ECO:0000250" key="2">
    <source>
        <dbReference type="UniProtKB" id="Q5HJF4"/>
    </source>
</evidence>
<evidence type="ECO:0000255" key="3">
    <source>
        <dbReference type="PROSITE-ProRule" id="PRU00493"/>
    </source>
</evidence>
<evidence type="ECO:0000255" key="4">
    <source>
        <dbReference type="PROSITE-ProRule" id="PRU00887"/>
    </source>
</evidence>
<evidence type="ECO:0000305" key="5"/>